<sequence>MTRTPTTRMGLLEVRGRADVASKGARLLRAKREVLAGELWKLTREVLAGRARLDEVLRGAVKALGLARALEGEEALASVALTAAREVPLQVSVRRVWGVPTPSVAAPALIRAADERGSSPTSWGLAGTEAARRHEEALEVLLRIASRELHLARLGEEIQATSRRINALEQLVLPALTAESGRIEAALEERDREDVVRLKRFRARRPRREASARRP</sequence>
<protein>
    <recommendedName>
        <fullName evidence="1">V-type ATP synthase subunit D</fullName>
    </recommendedName>
    <alternativeName>
        <fullName evidence="1">V-ATPase subunit D</fullName>
    </alternativeName>
</protein>
<organism>
    <name type="scientific">Anaeromyxobacter sp. (strain Fw109-5)</name>
    <dbReference type="NCBI Taxonomy" id="404589"/>
    <lineage>
        <taxon>Bacteria</taxon>
        <taxon>Pseudomonadati</taxon>
        <taxon>Myxococcota</taxon>
        <taxon>Myxococcia</taxon>
        <taxon>Myxococcales</taxon>
        <taxon>Cystobacterineae</taxon>
        <taxon>Anaeromyxobacteraceae</taxon>
        <taxon>Anaeromyxobacter</taxon>
    </lineage>
</organism>
<accession>A7HDG7</accession>
<comment type="function">
    <text evidence="1">Produces ATP from ADP in the presence of a proton gradient across the membrane.</text>
</comment>
<comment type="similarity">
    <text evidence="1">Belongs to the V-ATPase D subunit family.</text>
</comment>
<reference key="1">
    <citation type="journal article" date="2015" name="Genome Announc.">
        <title>Complete genome sequence of Anaeromyxobacter sp. Fw109-5, an anaerobic, metal-reducing bacterium isolated from a contaminated subsurface environment.</title>
        <authorList>
            <person name="Hwang C."/>
            <person name="Copeland A."/>
            <person name="Lucas S."/>
            <person name="Lapidus A."/>
            <person name="Barry K."/>
            <person name="Glavina Del Rio T."/>
            <person name="Dalin E."/>
            <person name="Tice H."/>
            <person name="Pitluck S."/>
            <person name="Sims D."/>
            <person name="Brettin T."/>
            <person name="Bruce D.C."/>
            <person name="Detter J.C."/>
            <person name="Han C.S."/>
            <person name="Schmutz J."/>
            <person name="Larimer F.W."/>
            <person name="Land M.L."/>
            <person name="Hauser L.J."/>
            <person name="Kyrpides N."/>
            <person name="Lykidis A."/>
            <person name="Richardson P."/>
            <person name="Belieav A."/>
            <person name="Sanford R.A."/>
            <person name="Loeffler F.E."/>
            <person name="Fields M.W."/>
        </authorList>
    </citation>
    <scope>NUCLEOTIDE SEQUENCE [LARGE SCALE GENOMIC DNA]</scope>
    <source>
        <strain>Fw109-5</strain>
    </source>
</reference>
<evidence type="ECO:0000255" key="1">
    <source>
        <dbReference type="HAMAP-Rule" id="MF_00271"/>
    </source>
</evidence>
<name>VATD_ANADF</name>
<dbReference type="EMBL" id="CP000769">
    <property type="protein sequence ID" value="ABS26763.1"/>
    <property type="molecule type" value="Genomic_DNA"/>
</dbReference>
<dbReference type="RefSeq" id="WP_012097357.1">
    <property type="nucleotide sequence ID" value="NC_009675.1"/>
</dbReference>
<dbReference type="SMR" id="A7HDG7"/>
<dbReference type="STRING" id="404589.Anae109_2562"/>
<dbReference type="KEGG" id="afw:Anae109_2562"/>
<dbReference type="eggNOG" id="COG1394">
    <property type="taxonomic scope" value="Bacteria"/>
</dbReference>
<dbReference type="HOGENOM" id="CLU_069688_2_1_7"/>
<dbReference type="OrthoDB" id="5525801at2"/>
<dbReference type="Proteomes" id="UP000006382">
    <property type="component" value="Chromosome"/>
</dbReference>
<dbReference type="GO" id="GO:0005524">
    <property type="term" value="F:ATP binding"/>
    <property type="evidence" value="ECO:0007669"/>
    <property type="project" value="UniProtKB-UniRule"/>
</dbReference>
<dbReference type="GO" id="GO:0046933">
    <property type="term" value="F:proton-transporting ATP synthase activity, rotational mechanism"/>
    <property type="evidence" value="ECO:0007669"/>
    <property type="project" value="UniProtKB-UniRule"/>
</dbReference>
<dbReference type="GO" id="GO:0046961">
    <property type="term" value="F:proton-transporting ATPase activity, rotational mechanism"/>
    <property type="evidence" value="ECO:0007669"/>
    <property type="project" value="InterPro"/>
</dbReference>
<dbReference type="GO" id="GO:0042777">
    <property type="term" value="P:proton motive force-driven plasma membrane ATP synthesis"/>
    <property type="evidence" value="ECO:0007669"/>
    <property type="project" value="UniProtKB-UniRule"/>
</dbReference>
<dbReference type="Gene3D" id="1.10.287.3240">
    <property type="match status" value="1"/>
</dbReference>
<dbReference type="HAMAP" id="MF_00271">
    <property type="entry name" value="ATP_synth_D_arch"/>
    <property type="match status" value="1"/>
</dbReference>
<dbReference type="InterPro" id="IPR002699">
    <property type="entry name" value="V_ATPase_D"/>
</dbReference>
<dbReference type="NCBIfam" id="TIGR00309">
    <property type="entry name" value="V_ATPase_subD"/>
    <property type="match status" value="1"/>
</dbReference>
<dbReference type="PANTHER" id="PTHR11671">
    <property type="entry name" value="V-TYPE ATP SYNTHASE SUBUNIT D"/>
    <property type="match status" value="1"/>
</dbReference>
<dbReference type="Pfam" id="PF01813">
    <property type="entry name" value="ATP-synt_D"/>
    <property type="match status" value="1"/>
</dbReference>
<feature type="chain" id="PRO_1000059146" description="V-type ATP synthase subunit D">
    <location>
        <begin position="1"/>
        <end position="215"/>
    </location>
</feature>
<proteinExistence type="inferred from homology"/>
<keyword id="KW-0066">ATP synthesis</keyword>
<keyword id="KW-0375">Hydrogen ion transport</keyword>
<keyword id="KW-0406">Ion transport</keyword>
<keyword id="KW-1185">Reference proteome</keyword>
<keyword id="KW-0813">Transport</keyword>
<gene>
    <name evidence="1" type="primary">atpD</name>
    <name type="ordered locus">Anae109_2562</name>
</gene>